<name>RAD25_SCHPO</name>
<reference key="1">
    <citation type="journal article" date="1994" name="Science">
        <title>14-3-3 protein homologs required for the DNA damage checkpoint in fission yeast.</title>
        <authorList>
            <person name="Ford J.C."/>
            <person name="Al-Khodairy F."/>
            <person name="Fotou E."/>
            <person name="Sheldrick K.S."/>
            <person name="Griffiths D.J.F."/>
            <person name="Carr A.M."/>
        </authorList>
    </citation>
    <scope>NUCLEOTIDE SEQUENCE [GENOMIC DNA]</scope>
    <scope>FUNCTION</scope>
</reference>
<reference key="2">
    <citation type="journal article" date="2002" name="Nature">
        <title>The genome sequence of Schizosaccharomyces pombe.</title>
        <authorList>
            <person name="Wood V."/>
            <person name="Gwilliam R."/>
            <person name="Rajandream M.A."/>
            <person name="Lyne M.H."/>
            <person name="Lyne R."/>
            <person name="Stewart A."/>
            <person name="Sgouros J.G."/>
            <person name="Peat N."/>
            <person name="Hayles J."/>
            <person name="Baker S.G."/>
            <person name="Basham D."/>
            <person name="Bowman S."/>
            <person name="Brooks K."/>
            <person name="Brown D."/>
            <person name="Brown S."/>
            <person name="Chillingworth T."/>
            <person name="Churcher C.M."/>
            <person name="Collins M."/>
            <person name="Connor R."/>
            <person name="Cronin A."/>
            <person name="Davis P."/>
            <person name="Feltwell T."/>
            <person name="Fraser A."/>
            <person name="Gentles S."/>
            <person name="Goble A."/>
            <person name="Hamlin N."/>
            <person name="Harris D.E."/>
            <person name="Hidalgo J."/>
            <person name="Hodgson G."/>
            <person name="Holroyd S."/>
            <person name="Hornsby T."/>
            <person name="Howarth S."/>
            <person name="Huckle E.J."/>
            <person name="Hunt S."/>
            <person name="Jagels K."/>
            <person name="James K.D."/>
            <person name="Jones L."/>
            <person name="Jones M."/>
            <person name="Leather S."/>
            <person name="McDonald S."/>
            <person name="McLean J."/>
            <person name="Mooney P."/>
            <person name="Moule S."/>
            <person name="Mungall K.L."/>
            <person name="Murphy L.D."/>
            <person name="Niblett D."/>
            <person name="Odell C."/>
            <person name="Oliver K."/>
            <person name="O'Neil S."/>
            <person name="Pearson D."/>
            <person name="Quail M.A."/>
            <person name="Rabbinowitsch E."/>
            <person name="Rutherford K.M."/>
            <person name="Rutter S."/>
            <person name="Saunders D."/>
            <person name="Seeger K."/>
            <person name="Sharp S."/>
            <person name="Skelton J."/>
            <person name="Simmonds M.N."/>
            <person name="Squares R."/>
            <person name="Squares S."/>
            <person name="Stevens K."/>
            <person name="Taylor K."/>
            <person name="Taylor R.G."/>
            <person name="Tivey A."/>
            <person name="Walsh S.V."/>
            <person name="Warren T."/>
            <person name="Whitehead S."/>
            <person name="Woodward J.R."/>
            <person name="Volckaert G."/>
            <person name="Aert R."/>
            <person name="Robben J."/>
            <person name="Grymonprez B."/>
            <person name="Weltjens I."/>
            <person name="Vanstreels E."/>
            <person name="Rieger M."/>
            <person name="Schaefer M."/>
            <person name="Mueller-Auer S."/>
            <person name="Gabel C."/>
            <person name="Fuchs M."/>
            <person name="Duesterhoeft A."/>
            <person name="Fritzc C."/>
            <person name="Holzer E."/>
            <person name="Moestl D."/>
            <person name="Hilbert H."/>
            <person name="Borzym K."/>
            <person name="Langer I."/>
            <person name="Beck A."/>
            <person name="Lehrach H."/>
            <person name="Reinhardt R."/>
            <person name="Pohl T.M."/>
            <person name="Eger P."/>
            <person name="Zimmermann W."/>
            <person name="Wedler H."/>
            <person name="Wambutt R."/>
            <person name="Purnelle B."/>
            <person name="Goffeau A."/>
            <person name="Cadieu E."/>
            <person name="Dreano S."/>
            <person name="Gloux S."/>
            <person name="Lelaure V."/>
            <person name="Mottier S."/>
            <person name="Galibert F."/>
            <person name="Aves S.J."/>
            <person name="Xiang Z."/>
            <person name="Hunt C."/>
            <person name="Moore K."/>
            <person name="Hurst S.M."/>
            <person name="Lucas M."/>
            <person name="Rochet M."/>
            <person name="Gaillardin C."/>
            <person name="Tallada V.A."/>
            <person name="Garzon A."/>
            <person name="Thode G."/>
            <person name="Daga R.R."/>
            <person name="Cruzado L."/>
            <person name="Jimenez J."/>
            <person name="Sanchez M."/>
            <person name="del Rey F."/>
            <person name="Benito J."/>
            <person name="Dominguez A."/>
            <person name="Revuelta J.L."/>
            <person name="Moreno S."/>
            <person name="Armstrong J."/>
            <person name="Forsburg S.L."/>
            <person name="Cerutti L."/>
            <person name="Lowe T."/>
            <person name="McCombie W.R."/>
            <person name="Paulsen I."/>
            <person name="Potashkin J."/>
            <person name="Shpakovski G.V."/>
            <person name="Ussery D."/>
            <person name="Barrell B.G."/>
            <person name="Nurse P."/>
        </authorList>
    </citation>
    <scope>NUCLEOTIDE SEQUENCE [LARGE SCALE GENOMIC DNA]</scope>
    <source>
        <strain>972 / ATCC 24843</strain>
    </source>
</reference>
<reference key="3">
    <citation type="journal article" date="2002" name="Mol. Cell. Biol.">
        <title>The 14-3-3 proteins Rad24 and Rad25 negatively regulate Byr2 by affecting its localization in Schizosaccharomyces pombe.</title>
        <authorList>
            <person name="Ozoe F."/>
            <person name="Kurokawa R."/>
            <person name="Kobayashi Y."/>
            <person name="Jeong H.T."/>
            <person name="Tanaka K."/>
            <person name="Sen K."/>
            <person name="Nakagawa T."/>
            <person name="Matsuda H."/>
            <person name="Kawamukai M."/>
        </authorList>
    </citation>
    <scope>FUNCTION</scope>
    <scope>INTERACTION WITH RAD24 AND BYR2</scope>
    <scope>SUBCELLULAR LOCATION</scope>
</reference>
<reference key="4">
    <citation type="journal article" date="2008" name="J. Proteome Res.">
        <title>Phosphoproteome analysis of fission yeast.</title>
        <authorList>
            <person name="Wilson-Grady J.T."/>
            <person name="Villen J."/>
            <person name="Gygi S.P."/>
        </authorList>
    </citation>
    <scope>PHOSPHORYLATION [LARGE SCALE ANALYSIS] AT SER-234 AND SER-253</scope>
    <scope>IDENTIFICATION BY MASS SPECTROMETRY</scope>
</reference>
<keyword id="KW-0131">Cell cycle</keyword>
<keyword id="KW-0963">Cytoplasm</keyword>
<keyword id="KW-0227">DNA damage</keyword>
<keyword id="KW-0597">Phosphoprotein</keyword>
<keyword id="KW-1185">Reference proteome</keyword>
<protein>
    <recommendedName>
        <fullName>Checkpoint signal transducer rad25</fullName>
    </recommendedName>
</protein>
<feature type="chain" id="PRO_0000058718" description="Checkpoint signal transducer rad25">
    <location>
        <begin position="1"/>
        <end position="270"/>
    </location>
</feature>
<feature type="region of interest" description="Disordered" evidence="2">
    <location>
        <begin position="240"/>
        <end position="270"/>
    </location>
</feature>
<feature type="compositionally biased region" description="Basic and acidic residues" evidence="2">
    <location>
        <begin position="254"/>
        <end position="270"/>
    </location>
</feature>
<feature type="modified residue" description="Phosphoserine" evidence="4">
    <location>
        <position position="234"/>
    </location>
</feature>
<feature type="modified residue" description="Phosphoserine" evidence="4">
    <location>
        <position position="253"/>
    </location>
</feature>
<evidence type="ECO:0000250" key="1">
    <source>
        <dbReference type="UniProtKB" id="P42656"/>
    </source>
</evidence>
<evidence type="ECO:0000256" key="2">
    <source>
        <dbReference type="SAM" id="MobiDB-lite"/>
    </source>
</evidence>
<evidence type="ECO:0000269" key="3">
    <source>
    </source>
</evidence>
<evidence type="ECO:0000269" key="4">
    <source>
    </source>
</evidence>
<evidence type="ECO:0000269" key="5">
    <source>
    </source>
</evidence>
<evidence type="ECO:0000303" key="6">
    <source>
    </source>
</evidence>
<evidence type="ECO:0000305" key="7"/>
<evidence type="ECO:0000305" key="8">
    <source>
    </source>
</evidence>
<evidence type="ECO:0000312" key="9">
    <source>
        <dbReference type="PomBase" id="SPAC17A2.13c"/>
    </source>
</evidence>
<sequence length="270" mass="30369">MSNSRENSVYLAKLAEQAERYEEMVENMKKVACSNDKLSVEERNLLSVAYKNIIGARRASWRIISSIEQKEESRGNTRQAALIKEYRKKIEDELSDICHDVLSVLEKHLIPAATTGESKVFYYKMKGDYYRYLAEFTVGEVCKEAADSSLEAYKAASDIAVAELPPTDPMRLGLALNFSVFYYEILDSPESACHLAKQVFDEAISELDSLSEESYKDSTLIMQLLRDNLTLWTSDAEYNQSAKEEAPAAAAASENEHPEPKESTTDTVKA</sequence>
<dbReference type="EMBL" id="X79207">
    <property type="protein sequence ID" value="CAA55796.1"/>
    <property type="molecule type" value="Genomic_DNA"/>
</dbReference>
<dbReference type="EMBL" id="CU329670">
    <property type="protein sequence ID" value="CAB16570.1"/>
    <property type="molecule type" value="Genomic_DNA"/>
</dbReference>
<dbReference type="PIR" id="T37814">
    <property type="entry name" value="T37814"/>
</dbReference>
<dbReference type="RefSeq" id="NP_594247.1">
    <property type="nucleotide sequence ID" value="NM_001019670.2"/>
</dbReference>
<dbReference type="SMR" id="P42657"/>
<dbReference type="BioGRID" id="278722">
    <property type="interactions" value="65"/>
</dbReference>
<dbReference type="FunCoup" id="P42657">
    <property type="interactions" value="543"/>
</dbReference>
<dbReference type="IntAct" id="P42657">
    <property type="interactions" value="1"/>
</dbReference>
<dbReference type="STRING" id="284812.P42657"/>
<dbReference type="iPTMnet" id="P42657"/>
<dbReference type="PaxDb" id="4896-SPAC17A2.13c.1"/>
<dbReference type="EnsemblFungi" id="SPAC17A2.13c.1">
    <property type="protein sequence ID" value="SPAC17A2.13c.1:pep"/>
    <property type="gene ID" value="SPAC17A2.13c"/>
</dbReference>
<dbReference type="GeneID" id="2542252"/>
<dbReference type="KEGG" id="spo:2542252"/>
<dbReference type="PomBase" id="SPAC17A2.13c">
    <property type="gene designation" value="rad25"/>
</dbReference>
<dbReference type="VEuPathDB" id="FungiDB:SPAC17A2.13c"/>
<dbReference type="eggNOG" id="KOG0841">
    <property type="taxonomic scope" value="Eukaryota"/>
</dbReference>
<dbReference type="HOGENOM" id="CLU_058290_0_0_1"/>
<dbReference type="InParanoid" id="P42657"/>
<dbReference type="OMA" id="CNDVLXT"/>
<dbReference type="PhylomeDB" id="P42657"/>
<dbReference type="Reactome" id="R-SPO-3371453">
    <property type="pathway name" value="Regulation of HSF1-mediated heat shock response"/>
</dbReference>
<dbReference type="Reactome" id="R-SPO-3371511">
    <property type="pathway name" value="HSF1 activation"/>
</dbReference>
<dbReference type="Reactome" id="R-SPO-5625740">
    <property type="pathway name" value="RHO GTPases activate PKNs"/>
</dbReference>
<dbReference type="Reactome" id="R-SPO-5628897">
    <property type="pathway name" value="TP53 Regulates Metabolic Genes"/>
</dbReference>
<dbReference type="Reactome" id="R-SPO-75035">
    <property type="pathway name" value="Chk1/Chk2(Cds1) mediated inactivation of Cyclin B:Cdk1 complex"/>
</dbReference>
<dbReference type="PRO" id="PR:P42657"/>
<dbReference type="Proteomes" id="UP000002485">
    <property type="component" value="Chromosome I"/>
</dbReference>
<dbReference type="GO" id="GO:0032153">
    <property type="term" value="C:cell division site"/>
    <property type="evidence" value="ECO:0007005"/>
    <property type="project" value="PomBase"/>
</dbReference>
<dbReference type="GO" id="GO:0051286">
    <property type="term" value="C:cell tip"/>
    <property type="evidence" value="ECO:0007005"/>
    <property type="project" value="PomBase"/>
</dbReference>
<dbReference type="GO" id="GO:0000781">
    <property type="term" value="C:chromosome, telomeric region"/>
    <property type="evidence" value="ECO:0007669"/>
    <property type="project" value="GOC"/>
</dbReference>
<dbReference type="GO" id="GO:0005737">
    <property type="term" value="C:cytoplasm"/>
    <property type="evidence" value="ECO:0000318"/>
    <property type="project" value="GO_Central"/>
</dbReference>
<dbReference type="GO" id="GO:0005829">
    <property type="term" value="C:cytosol"/>
    <property type="evidence" value="ECO:0007005"/>
    <property type="project" value="PomBase"/>
</dbReference>
<dbReference type="GO" id="GO:0005634">
    <property type="term" value="C:nucleus"/>
    <property type="evidence" value="ECO:0007005"/>
    <property type="project" value="PomBase"/>
</dbReference>
<dbReference type="GO" id="GO:0140311">
    <property type="term" value="F:protein sequestering activity"/>
    <property type="evidence" value="ECO:0000303"/>
    <property type="project" value="PomBase"/>
</dbReference>
<dbReference type="GO" id="GO:0007095">
    <property type="term" value="P:mitotic G2 DNA damage checkpoint signaling"/>
    <property type="evidence" value="ECO:0000315"/>
    <property type="project" value="PomBase"/>
</dbReference>
<dbReference type="GO" id="GO:0031508">
    <property type="term" value="P:pericentric heterochromatin formation"/>
    <property type="evidence" value="ECO:0000316"/>
    <property type="project" value="PomBase"/>
</dbReference>
<dbReference type="GO" id="GO:0008104">
    <property type="term" value="P:protein localization"/>
    <property type="evidence" value="ECO:0000318"/>
    <property type="project" value="GO_Central"/>
</dbReference>
<dbReference type="GO" id="GO:0007165">
    <property type="term" value="P:signal transduction"/>
    <property type="evidence" value="ECO:0000318"/>
    <property type="project" value="GO_Central"/>
</dbReference>
<dbReference type="GO" id="GO:0031509">
    <property type="term" value="P:subtelomeric heterochromatin formation"/>
    <property type="evidence" value="ECO:0000315"/>
    <property type="project" value="PomBase"/>
</dbReference>
<dbReference type="CDD" id="cd11309">
    <property type="entry name" value="14-3-3_fungi"/>
    <property type="match status" value="1"/>
</dbReference>
<dbReference type="FunFam" id="1.20.190.20:FF:000002">
    <property type="entry name" value="14-3-3 protein epsilon"/>
    <property type="match status" value="1"/>
</dbReference>
<dbReference type="Gene3D" id="1.20.190.20">
    <property type="entry name" value="14-3-3 domain"/>
    <property type="match status" value="1"/>
</dbReference>
<dbReference type="InterPro" id="IPR000308">
    <property type="entry name" value="14-3-3"/>
</dbReference>
<dbReference type="InterPro" id="IPR023409">
    <property type="entry name" value="14-3-3_CS"/>
</dbReference>
<dbReference type="InterPro" id="IPR036815">
    <property type="entry name" value="14-3-3_dom_sf"/>
</dbReference>
<dbReference type="InterPro" id="IPR023410">
    <property type="entry name" value="14-3-3_domain"/>
</dbReference>
<dbReference type="PANTHER" id="PTHR18860">
    <property type="entry name" value="14-3-3 PROTEIN"/>
    <property type="match status" value="1"/>
</dbReference>
<dbReference type="Pfam" id="PF00244">
    <property type="entry name" value="14-3-3"/>
    <property type="match status" value="1"/>
</dbReference>
<dbReference type="PIRSF" id="PIRSF000868">
    <property type="entry name" value="14-3-3"/>
    <property type="match status" value="1"/>
</dbReference>
<dbReference type="PRINTS" id="PR00305">
    <property type="entry name" value="1433ZETA"/>
</dbReference>
<dbReference type="SMART" id="SM00101">
    <property type="entry name" value="14_3_3"/>
    <property type="match status" value="1"/>
</dbReference>
<dbReference type="SUPFAM" id="SSF48445">
    <property type="entry name" value="14-3-3 protein"/>
    <property type="match status" value="1"/>
</dbReference>
<dbReference type="PROSITE" id="PS00796">
    <property type="entry name" value="1433_1"/>
    <property type="match status" value="1"/>
</dbReference>
<dbReference type="PROSITE" id="PS00797">
    <property type="entry name" value="1433_2"/>
    <property type="match status" value="1"/>
</dbReference>
<gene>
    <name evidence="6 9" type="primary">rad25</name>
    <name evidence="9" type="ORF">SPAC17A2.13c</name>
</gene>
<accession>P42657</accession>
<organism>
    <name type="scientific">Schizosaccharomyces pombe (strain 972 / ATCC 24843)</name>
    <name type="common">Fission yeast</name>
    <dbReference type="NCBI Taxonomy" id="284812"/>
    <lineage>
        <taxon>Eukaryota</taxon>
        <taxon>Fungi</taxon>
        <taxon>Dikarya</taxon>
        <taxon>Ascomycota</taxon>
        <taxon>Taphrinomycotina</taxon>
        <taxon>Schizosaccharomycetes</taxon>
        <taxon>Schizosaccharomycetales</taxon>
        <taxon>Schizosaccharomycetaceae</taxon>
        <taxon>Schizosaccharomyces</taxon>
    </lineage>
</organism>
<comment type="function">
    <text evidence="1 3 5">Acts in cell cycle and stress checkpoint signaling by sequestering signal transducers regulated by the checkpoints (By similarity). Required for the DNA damage checkpoint that ensures that DNA damage is repaired before mitosis is attempted (PubMed:8036497). Sequesters byr2 in the cytoplasm to prevent its translocation to the plasma membrane (PubMed:12242289).</text>
</comment>
<comment type="subunit">
    <text evidence="3">Interacts with rad24 (PubMed:12242289). Interacts with byr2 (PubMed:12242289).</text>
</comment>
<comment type="subcellular location">
    <subcellularLocation>
        <location evidence="8">Cytoplasm</location>
    </subcellularLocation>
</comment>
<comment type="similarity">
    <text evidence="7">Belongs to the 14-3-3 family.</text>
</comment>
<proteinExistence type="evidence at protein level"/>